<dbReference type="EC" id="2.7.10.1" evidence="7 10"/>
<dbReference type="EMBL" id="M34353">
    <property type="protein sequence ID" value="AAA60278.1"/>
    <property type="molecule type" value="mRNA"/>
</dbReference>
<dbReference type="EMBL" id="Z98880">
    <property type="status" value="NOT_ANNOTATED_CDS"/>
    <property type="molecule type" value="Genomic_DNA"/>
</dbReference>
<dbReference type="EMBL" id="AL132671">
    <property type="status" value="NOT_ANNOTATED_CDS"/>
    <property type="molecule type" value="Genomic_DNA"/>
</dbReference>
<dbReference type="EMBL" id="M13599">
    <property type="protein sequence ID" value="AAA60277.1"/>
    <property type="molecule type" value="Genomic_DNA"/>
</dbReference>
<dbReference type="EMBL" id="M13368">
    <property type="protein sequence ID" value="AAA60277.1"/>
    <property type="status" value="JOINED"/>
    <property type="molecule type" value="Genomic_DNA"/>
</dbReference>
<dbReference type="EMBL" id="M13591">
    <property type="protein sequence ID" value="AAA60277.1"/>
    <property type="status" value="JOINED"/>
    <property type="molecule type" value="Genomic_DNA"/>
</dbReference>
<dbReference type="EMBL" id="M13592">
    <property type="protein sequence ID" value="AAA60277.1"/>
    <property type="status" value="JOINED"/>
    <property type="molecule type" value="Genomic_DNA"/>
</dbReference>
<dbReference type="EMBL" id="M13593">
    <property type="protein sequence ID" value="AAA60277.1"/>
    <property type="status" value="JOINED"/>
    <property type="molecule type" value="Genomic_DNA"/>
</dbReference>
<dbReference type="EMBL" id="M13594">
    <property type="protein sequence ID" value="AAA60277.1"/>
    <property type="status" value="JOINED"/>
    <property type="molecule type" value="Genomic_DNA"/>
</dbReference>
<dbReference type="EMBL" id="M13595">
    <property type="protein sequence ID" value="AAA60277.1"/>
    <property type="status" value="JOINED"/>
    <property type="molecule type" value="Genomic_DNA"/>
</dbReference>
<dbReference type="EMBL" id="M13596">
    <property type="protein sequence ID" value="AAA60277.1"/>
    <property type="status" value="JOINED"/>
    <property type="molecule type" value="Genomic_DNA"/>
</dbReference>
<dbReference type="EMBL" id="M13597">
    <property type="protein sequence ID" value="AAA60277.1"/>
    <property type="status" value="JOINED"/>
    <property type="molecule type" value="Genomic_DNA"/>
</dbReference>
<dbReference type="EMBL" id="M13598">
    <property type="protein sequence ID" value="AAA60277.1"/>
    <property type="status" value="JOINED"/>
    <property type="molecule type" value="Genomic_DNA"/>
</dbReference>
<dbReference type="EMBL" id="M13880">
    <property type="protein sequence ID" value="AAA36580.1"/>
    <property type="molecule type" value="mRNA"/>
</dbReference>
<dbReference type="CCDS" id="CCDS5116.1"/>
<dbReference type="PIR" id="A35512">
    <property type="entry name" value="TVHURS"/>
</dbReference>
<dbReference type="RefSeq" id="NP_002935.2">
    <property type="nucleotide sequence ID" value="NM_002944.2"/>
</dbReference>
<dbReference type="PDB" id="3ZBF">
    <property type="method" value="X-ray"/>
    <property type="resolution" value="2.20 A"/>
    <property type="chains" value="A=1934-2232"/>
</dbReference>
<dbReference type="PDB" id="4UXL">
    <property type="method" value="X-ray"/>
    <property type="resolution" value="2.40 A"/>
    <property type="chains" value="A=1934-2232"/>
</dbReference>
<dbReference type="PDB" id="7Z5W">
    <property type="method" value="X-ray"/>
    <property type="resolution" value="2.25 A"/>
    <property type="chains" value="A/B=1930-2256"/>
</dbReference>
<dbReference type="PDB" id="7Z5X">
    <property type="method" value="X-ray"/>
    <property type="resolution" value="2.04 A"/>
    <property type="chains" value="A/B=1930-2256"/>
</dbReference>
<dbReference type="PDBsum" id="3ZBF"/>
<dbReference type="PDBsum" id="4UXL"/>
<dbReference type="PDBsum" id="7Z5W"/>
<dbReference type="PDBsum" id="7Z5X"/>
<dbReference type="SMR" id="P08922"/>
<dbReference type="BioGRID" id="112025">
    <property type="interactions" value="93"/>
</dbReference>
<dbReference type="CORUM" id="P08922"/>
<dbReference type="FunCoup" id="P08922">
    <property type="interactions" value="69"/>
</dbReference>
<dbReference type="IntAct" id="P08922">
    <property type="interactions" value="100"/>
</dbReference>
<dbReference type="MINT" id="P08922"/>
<dbReference type="STRING" id="9606.ENSP00000357494"/>
<dbReference type="BindingDB" id="P08922"/>
<dbReference type="ChEMBL" id="CHEMBL5568"/>
<dbReference type="DrugBank" id="DB08865">
    <property type="generic name" value="Crizotinib"/>
</dbReference>
<dbReference type="DrugBank" id="DB11986">
    <property type="generic name" value="Entrectinib"/>
</dbReference>
<dbReference type="DrugBank" id="DB12010">
    <property type="generic name" value="Fostamatinib"/>
</dbReference>
<dbReference type="DrugBank" id="DB12130">
    <property type="generic name" value="Lorlatinib"/>
</dbReference>
<dbReference type="DrugBank" id="DB16826">
    <property type="generic name" value="Repotrectinib"/>
</dbReference>
<dbReference type="DrugCentral" id="P08922"/>
<dbReference type="GuidetoPHARMACOLOGY" id="1840"/>
<dbReference type="GlyCosmos" id="P08922">
    <property type="glycosylation" value="33 sites, 1 glycan"/>
</dbReference>
<dbReference type="GlyGen" id="P08922">
    <property type="glycosylation" value="34 sites, 1 O-linked glycan (3 sites)"/>
</dbReference>
<dbReference type="iPTMnet" id="P08922"/>
<dbReference type="PhosphoSitePlus" id="P08922"/>
<dbReference type="BioMuta" id="ROS1"/>
<dbReference type="DMDM" id="126302596"/>
<dbReference type="CPTAC" id="CPTAC-3062"/>
<dbReference type="jPOST" id="P08922"/>
<dbReference type="MassIVE" id="P08922"/>
<dbReference type="PaxDb" id="9606-ENSP00000357494"/>
<dbReference type="PeptideAtlas" id="P08922"/>
<dbReference type="ProteomicsDB" id="52177"/>
<dbReference type="ABCD" id="P08922">
    <property type="antibodies" value="2 sequenced antibodies"/>
</dbReference>
<dbReference type="Antibodypedia" id="32541">
    <property type="antibodies" value="700 antibodies from 37 providers"/>
</dbReference>
<dbReference type="DNASU" id="6098"/>
<dbReference type="Ensembl" id="ENST00000368508.7">
    <property type="protein sequence ID" value="ENSP00000357494.3"/>
    <property type="gene ID" value="ENSG00000047936.11"/>
</dbReference>
<dbReference type="GeneID" id="6098"/>
<dbReference type="KEGG" id="hsa:6098"/>
<dbReference type="UCSC" id="uc003pxp.2">
    <property type="organism name" value="human"/>
</dbReference>
<dbReference type="AGR" id="HGNC:10261"/>
<dbReference type="CTD" id="6098"/>
<dbReference type="DisGeNET" id="6098"/>
<dbReference type="GeneCards" id="ROS1"/>
<dbReference type="HGNC" id="HGNC:10261">
    <property type="gene designation" value="ROS1"/>
</dbReference>
<dbReference type="HPA" id="ENSG00000047936">
    <property type="expression patterns" value="Group enriched (epididymis, lung)"/>
</dbReference>
<dbReference type="MalaCards" id="ROS1"/>
<dbReference type="MIM" id="165020">
    <property type="type" value="gene"/>
</dbReference>
<dbReference type="neXtProt" id="NX_P08922"/>
<dbReference type="OpenTargets" id="ENSG00000047936"/>
<dbReference type="Orphanet" id="70567">
    <property type="disease" value="Cholangiocarcinoma"/>
</dbReference>
<dbReference type="Orphanet" id="251579">
    <property type="disease" value="Giant cell glioblastoma"/>
</dbReference>
<dbReference type="PharmGKB" id="PA34633"/>
<dbReference type="VEuPathDB" id="HostDB:ENSG00000047936"/>
<dbReference type="eggNOG" id="KOG1095">
    <property type="taxonomic scope" value="Eukaryota"/>
</dbReference>
<dbReference type="GeneTree" id="ENSGT00940000160831"/>
<dbReference type="InParanoid" id="P08922"/>
<dbReference type="OrthoDB" id="65481at2759"/>
<dbReference type="PAN-GO" id="P08922">
    <property type="GO annotations" value="7 GO annotations based on evolutionary models"/>
</dbReference>
<dbReference type="PhylomeDB" id="P08922"/>
<dbReference type="TreeFam" id="TF351636"/>
<dbReference type="BRENDA" id="2.7.10.1">
    <property type="organism ID" value="2681"/>
</dbReference>
<dbReference type="PathwayCommons" id="P08922"/>
<dbReference type="SignaLink" id="P08922"/>
<dbReference type="SIGNOR" id="P08922"/>
<dbReference type="BioGRID-ORCS" id="6098">
    <property type="hits" value="8 hits in 1191 CRISPR screens"/>
</dbReference>
<dbReference type="ChiTaRS" id="ROS1">
    <property type="organism name" value="human"/>
</dbReference>
<dbReference type="EvolutionaryTrace" id="P08922"/>
<dbReference type="GeneWiki" id="ROS1_(gene)"/>
<dbReference type="GenomeRNAi" id="6098"/>
<dbReference type="Pharos" id="P08922">
    <property type="development level" value="Tclin"/>
</dbReference>
<dbReference type="PRO" id="PR:P08922"/>
<dbReference type="Proteomes" id="UP000005640">
    <property type="component" value="Chromosome 6"/>
</dbReference>
<dbReference type="RNAct" id="P08922">
    <property type="molecule type" value="protein"/>
</dbReference>
<dbReference type="Bgee" id="ENSG00000047936">
    <property type="expression patterns" value="Expressed in upper lobe of left lung and 59 other cell types or tissues"/>
</dbReference>
<dbReference type="ExpressionAtlas" id="P08922">
    <property type="expression patterns" value="baseline and differential"/>
</dbReference>
<dbReference type="GO" id="GO:0016020">
    <property type="term" value="C:membrane"/>
    <property type="evidence" value="ECO:0000304"/>
    <property type="project" value="ProtInc"/>
</dbReference>
<dbReference type="GO" id="GO:0005886">
    <property type="term" value="C:plasma membrane"/>
    <property type="evidence" value="ECO:0000318"/>
    <property type="project" value="GO_Central"/>
</dbReference>
<dbReference type="GO" id="GO:0043235">
    <property type="term" value="C:receptor complex"/>
    <property type="evidence" value="ECO:0000318"/>
    <property type="project" value="GO_Central"/>
</dbReference>
<dbReference type="GO" id="GO:0005524">
    <property type="term" value="F:ATP binding"/>
    <property type="evidence" value="ECO:0007669"/>
    <property type="project" value="UniProtKB-KW"/>
</dbReference>
<dbReference type="GO" id="GO:0019903">
    <property type="term" value="F:protein phosphatase binding"/>
    <property type="evidence" value="ECO:0000353"/>
    <property type="project" value="UniProtKB"/>
</dbReference>
<dbReference type="GO" id="GO:0004713">
    <property type="term" value="F:protein tyrosine kinase activity"/>
    <property type="evidence" value="ECO:0000314"/>
    <property type="project" value="UniProtKB"/>
</dbReference>
<dbReference type="GO" id="GO:0004714">
    <property type="term" value="F:transmembrane receptor protein tyrosine kinase activity"/>
    <property type="evidence" value="ECO:0000318"/>
    <property type="project" value="GO_Central"/>
</dbReference>
<dbReference type="GO" id="GO:0030154">
    <property type="term" value="P:cell differentiation"/>
    <property type="evidence" value="ECO:0000250"/>
    <property type="project" value="UniProtKB"/>
</dbReference>
<dbReference type="GO" id="GO:0007169">
    <property type="term" value="P:cell surface receptor protein tyrosine kinase signaling pathway"/>
    <property type="evidence" value="ECO:0000318"/>
    <property type="project" value="GO_Central"/>
</dbReference>
<dbReference type="GO" id="GO:0002066">
    <property type="term" value="P:columnar/cuboidal epithelial cell development"/>
    <property type="evidence" value="ECO:0000250"/>
    <property type="project" value="UniProtKB"/>
</dbReference>
<dbReference type="GO" id="GO:0006468">
    <property type="term" value="P:protein phosphorylation"/>
    <property type="evidence" value="ECO:0000314"/>
    <property type="project" value="UniProtKB"/>
</dbReference>
<dbReference type="GO" id="GO:0001558">
    <property type="term" value="P:regulation of cell growth"/>
    <property type="evidence" value="ECO:0000314"/>
    <property type="project" value="UniProtKB"/>
</dbReference>
<dbReference type="GO" id="GO:0070372">
    <property type="term" value="P:regulation of ERK1 and ERK2 cascade"/>
    <property type="evidence" value="ECO:0000250"/>
    <property type="project" value="UniProtKB"/>
</dbReference>
<dbReference type="GO" id="GO:0032006">
    <property type="term" value="P:regulation of TOR signaling"/>
    <property type="evidence" value="ECO:0000314"/>
    <property type="project" value="UniProtKB"/>
</dbReference>
<dbReference type="GO" id="GO:0007283">
    <property type="term" value="P:spermatogenesis"/>
    <property type="evidence" value="ECO:0000250"/>
    <property type="project" value="UniProtKB"/>
</dbReference>
<dbReference type="CDD" id="cd00063">
    <property type="entry name" value="FN3"/>
    <property type="match status" value="7"/>
</dbReference>
<dbReference type="CDD" id="cd05044">
    <property type="entry name" value="PTKc_c-ros"/>
    <property type="match status" value="1"/>
</dbReference>
<dbReference type="FunFam" id="1.10.510.10:FF:000341">
    <property type="entry name" value="Tyrosine-protein kinase receptor"/>
    <property type="match status" value="1"/>
</dbReference>
<dbReference type="FunFam" id="2.120.10.30:FF:000038">
    <property type="entry name" value="Tyrosine-protein kinase receptor"/>
    <property type="match status" value="1"/>
</dbReference>
<dbReference type="FunFam" id="2.120.10.30:FF:000042">
    <property type="entry name" value="Tyrosine-protein kinase receptor"/>
    <property type="match status" value="1"/>
</dbReference>
<dbReference type="FunFam" id="2.120.10.30:FF:000044">
    <property type="entry name" value="Tyrosine-protein kinase receptor"/>
    <property type="match status" value="1"/>
</dbReference>
<dbReference type="FunFam" id="2.60.40.10:FF:000882">
    <property type="entry name" value="Tyrosine-protein kinase receptor"/>
    <property type="match status" value="1"/>
</dbReference>
<dbReference type="FunFam" id="2.60.40.10:FF:000984">
    <property type="entry name" value="Tyrosine-protein kinase receptor"/>
    <property type="match status" value="1"/>
</dbReference>
<dbReference type="FunFam" id="2.60.40.10:FF:001018">
    <property type="entry name" value="Tyrosine-protein kinase receptor"/>
    <property type="match status" value="1"/>
</dbReference>
<dbReference type="FunFam" id="2.60.40.10:FF:001024">
    <property type="entry name" value="Tyrosine-protein kinase receptor"/>
    <property type="match status" value="1"/>
</dbReference>
<dbReference type="FunFam" id="2.60.40.10:FF:001074">
    <property type="entry name" value="Tyrosine-protein kinase receptor"/>
    <property type="match status" value="1"/>
</dbReference>
<dbReference type="FunFam" id="2.60.40.10:FF:001237">
    <property type="entry name" value="Tyrosine-protein kinase receptor"/>
    <property type="match status" value="1"/>
</dbReference>
<dbReference type="FunFam" id="2.60.40.10:FF:001816">
    <property type="entry name" value="Tyrosine-protein kinase receptor"/>
    <property type="match status" value="1"/>
</dbReference>
<dbReference type="FunFam" id="3.30.200.20:FF:000301">
    <property type="entry name" value="Tyrosine-protein kinase receptor"/>
    <property type="match status" value="1"/>
</dbReference>
<dbReference type="Gene3D" id="2.60.40.10">
    <property type="entry name" value="Immunoglobulins"/>
    <property type="match status" value="7"/>
</dbReference>
<dbReference type="Gene3D" id="3.30.200.20">
    <property type="entry name" value="Phosphorylase Kinase, domain 1"/>
    <property type="match status" value="1"/>
</dbReference>
<dbReference type="Gene3D" id="2.120.10.30">
    <property type="entry name" value="TolB, C-terminal domain"/>
    <property type="match status" value="3"/>
</dbReference>
<dbReference type="Gene3D" id="1.10.510.10">
    <property type="entry name" value="Transferase(Phosphotransferase) domain 1"/>
    <property type="match status" value="1"/>
</dbReference>
<dbReference type="InterPro" id="IPR011042">
    <property type="entry name" value="6-blade_b-propeller_TolB-like"/>
</dbReference>
<dbReference type="InterPro" id="IPR003961">
    <property type="entry name" value="FN3_dom"/>
</dbReference>
<dbReference type="InterPro" id="IPR036116">
    <property type="entry name" value="FN3_sf"/>
</dbReference>
<dbReference type="InterPro" id="IPR013783">
    <property type="entry name" value="Ig-like_fold"/>
</dbReference>
<dbReference type="InterPro" id="IPR011009">
    <property type="entry name" value="Kinase-like_dom_sf"/>
</dbReference>
<dbReference type="InterPro" id="IPR000033">
    <property type="entry name" value="LDLR_classB_rpt"/>
</dbReference>
<dbReference type="InterPro" id="IPR000719">
    <property type="entry name" value="Prot_kinase_dom"/>
</dbReference>
<dbReference type="InterPro" id="IPR017441">
    <property type="entry name" value="Protein_kinase_ATP_BS"/>
</dbReference>
<dbReference type="InterPro" id="IPR050122">
    <property type="entry name" value="RTK"/>
</dbReference>
<dbReference type="InterPro" id="IPR001245">
    <property type="entry name" value="Ser-Thr/Tyr_kinase_cat_dom"/>
</dbReference>
<dbReference type="InterPro" id="IPR008266">
    <property type="entry name" value="Tyr_kinase_AS"/>
</dbReference>
<dbReference type="InterPro" id="IPR020635">
    <property type="entry name" value="Tyr_kinase_cat_dom"/>
</dbReference>
<dbReference type="InterPro" id="IPR002011">
    <property type="entry name" value="Tyr_kinase_rcpt_2_CS"/>
</dbReference>
<dbReference type="PANTHER" id="PTHR24416:SF527">
    <property type="entry name" value="PROTO-ONCOGENE TYROSINE-PROTEIN KINASE ROS"/>
    <property type="match status" value="1"/>
</dbReference>
<dbReference type="PANTHER" id="PTHR24416">
    <property type="entry name" value="TYROSINE-PROTEIN KINASE RECEPTOR"/>
    <property type="match status" value="1"/>
</dbReference>
<dbReference type="Pfam" id="PF00041">
    <property type="entry name" value="fn3"/>
    <property type="match status" value="2"/>
</dbReference>
<dbReference type="Pfam" id="PF07714">
    <property type="entry name" value="PK_Tyr_Ser-Thr"/>
    <property type="match status" value="1"/>
</dbReference>
<dbReference type="PRINTS" id="PR00109">
    <property type="entry name" value="TYRKINASE"/>
</dbReference>
<dbReference type="SMART" id="SM00060">
    <property type="entry name" value="FN3"/>
    <property type="match status" value="9"/>
</dbReference>
<dbReference type="SMART" id="SM00135">
    <property type="entry name" value="LY"/>
    <property type="match status" value="4"/>
</dbReference>
<dbReference type="SMART" id="SM00219">
    <property type="entry name" value="TyrKc"/>
    <property type="match status" value="1"/>
</dbReference>
<dbReference type="SUPFAM" id="SSF49265">
    <property type="entry name" value="Fibronectin type III"/>
    <property type="match status" value="5"/>
</dbReference>
<dbReference type="SUPFAM" id="SSF56112">
    <property type="entry name" value="Protein kinase-like (PK-like)"/>
    <property type="match status" value="1"/>
</dbReference>
<dbReference type="SUPFAM" id="SSF63825">
    <property type="entry name" value="YWTD domain"/>
    <property type="match status" value="3"/>
</dbReference>
<dbReference type="PROSITE" id="PS50853">
    <property type="entry name" value="FN3"/>
    <property type="match status" value="9"/>
</dbReference>
<dbReference type="PROSITE" id="PS00107">
    <property type="entry name" value="PROTEIN_KINASE_ATP"/>
    <property type="match status" value="1"/>
</dbReference>
<dbReference type="PROSITE" id="PS50011">
    <property type="entry name" value="PROTEIN_KINASE_DOM"/>
    <property type="match status" value="1"/>
</dbReference>
<dbReference type="PROSITE" id="PS00109">
    <property type="entry name" value="PROTEIN_KINASE_TYR"/>
    <property type="match status" value="1"/>
</dbReference>
<dbReference type="PROSITE" id="PS00239">
    <property type="entry name" value="RECEPTOR_TYR_KIN_II"/>
    <property type="match status" value="1"/>
</dbReference>
<gene>
    <name type="primary">ROS1</name>
    <name type="synonym">MCF3</name>
    <name type="synonym">ROS</name>
</gene>
<keyword id="KW-0002">3D-structure</keyword>
<keyword id="KW-0067">ATP-binding</keyword>
<keyword id="KW-1003">Cell membrane</keyword>
<keyword id="KW-0160">Chromosomal rearrangement</keyword>
<keyword id="KW-0325">Glycoprotein</keyword>
<keyword id="KW-0418">Kinase</keyword>
<keyword id="KW-0472">Membrane</keyword>
<keyword id="KW-0547">Nucleotide-binding</keyword>
<keyword id="KW-0597">Phosphoprotein</keyword>
<keyword id="KW-1267">Proteomics identification</keyword>
<keyword id="KW-0656">Proto-oncogene</keyword>
<keyword id="KW-0675">Receptor</keyword>
<keyword id="KW-1185">Reference proteome</keyword>
<keyword id="KW-0677">Repeat</keyword>
<keyword id="KW-0732">Signal</keyword>
<keyword id="KW-0808">Transferase</keyword>
<keyword id="KW-0812">Transmembrane</keyword>
<keyword id="KW-1133">Transmembrane helix</keyword>
<keyword id="KW-0829">Tyrosine-protein kinase</keyword>
<protein>
    <recommendedName>
        <fullName>Proto-oncogene tyrosine-protein kinase ROS</fullName>
        <ecNumber evidence="7 10">2.7.10.1</ecNumber>
    </recommendedName>
    <alternativeName>
        <fullName>Proto-oncogene c-Ros</fullName>
    </alternativeName>
    <alternativeName>
        <fullName>Proto-oncogene c-Ros-1</fullName>
    </alternativeName>
    <alternativeName>
        <fullName>Receptor tyrosine kinase c-ros oncogene 1</fullName>
    </alternativeName>
    <alternativeName>
        <fullName>c-Ros receptor tyrosine kinase</fullName>
    </alternativeName>
</protein>
<evidence type="ECO:0000250" key="1">
    <source>
        <dbReference type="UniProtKB" id="Q78DX7"/>
    </source>
</evidence>
<evidence type="ECO:0000255" key="2"/>
<evidence type="ECO:0000255" key="3">
    <source>
        <dbReference type="PROSITE-ProRule" id="PRU00159"/>
    </source>
</evidence>
<evidence type="ECO:0000255" key="4">
    <source>
        <dbReference type="PROSITE-ProRule" id="PRU00316"/>
    </source>
</evidence>
<evidence type="ECO:0000255" key="5">
    <source>
        <dbReference type="PROSITE-ProRule" id="PRU10028"/>
    </source>
</evidence>
<evidence type="ECO:0000256" key="6">
    <source>
        <dbReference type="SAM" id="MobiDB-lite"/>
    </source>
</evidence>
<evidence type="ECO:0000269" key="7">
    <source>
    </source>
</evidence>
<evidence type="ECO:0000269" key="8">
    <source>
    </source>
</evidence>
<evidence type="ECO:0000269" key="9">
    <source>
    </source>
</evidence>
<evidence type="ECO:0000269" key="10">
    <source>
    </source>
</evidence>
<evidence type="ECO:0000269" key="11">
    <source>
    </source>
</evidence>
<evidence type="ECO:0000269" key="12">
    <source>
    </source>
</evidence>
<evidence type="ECO:0000269" key="13">
    <source>
    </source>
</evidence>
<evidence type="ECO:0000305" key="14"/>
<evidence type="ECO:0000305" key="15">
    <source>
    </source>
</evidence>
<evidence type="ECO:0007829" key="16">
    <source>
        <dbReference type="PDB" id="7Z5W"/>
    </source>
</evidence>
<evidence type="ECO:0007829" key="17">
    <source>
        <dbReference type="PDB" id="7Z5X"/>
    </source>
</evidence>
<accession>P08922</accession>
<accession>Q15368</accession>
<accession>Q5TDB5</accession>
<feature type="signal peptide" evidence="2">
    <location>
        <begin position="1"/>
        <end position="27"/>
    </location>
</feature>
<feature type="chain" id="PRO_0000016722" description="Proto-oncogene tyrosine-protein kinase ROS">
    <location>
        <begin position="28"/>
        <end position="2347"/>
    </location>
</feature>
<feature type="topological domain" description="Extracellular" evidence="2">
    <location>
        <begin position="28"/>
        <end position="1859"/>
    </location>
</feature>
<feature type="transmembrane region" description="Helical" evidence="2">
    <location>
        <begin position="1860"/>
        <end position="1882"/>
    </location>
</feature>
<feature type="topological domain" description="Cytoplasmic" evidence="2">
    <location>
        <begin position="1883"/>
        <end position="2347"/>
    </location>
</feature>
<feature type="domain" description="Fibronectin type-III 1" evidence="4">
    <location>
        <begin position="101"/>
        <end position="196"/>
    </location>
</feature>
<feature type="domain" description="Fibronectin type-III 2" evidence="4">
    <location>
        <begin position="197"/>
        <end position="285"/>
    </location>
</feature>
<feature type="domain" description="Fibronectin type-III 3" evidence="4">
    <location>
        <begin position="557"/>
        <end position="671"/>
    </location>
</feature>
<feature type="domain" description="Fibronectin type-III 4" evidence="4">
    <location>
        <begin position="947"/>
        <end position="1042"/>
    </location>
</feature>
<feature type="domain" description="Fibronectin type-III 5" evidence="4">
    <location>
        <begin position="1043"/>
        <end position="1150"/>
    </location>
</feature>
<feature type="domain" description="Fibronectin type-III 6" evidence="4">
    <location>
        <begin position="1450"/>
        <end position="1556"/>
    </location>
</feature>
<feature type="domain" description="Fibronectin type-III 7" evidence="4">
    <location>
        <begin position="1557"/>
        <end position="1656"/>
    </location>
</feature>
<feature type="domain" description="Fibronectin type-III 8" evidence="4">
    <location>
        <begin position="1658"/>
        <end position="1751"/>
    </location>
</feature>
<feature type="domain" description="Fibronectin type-III 9" evidence="4">
    <location>
        <begin position="1752"/>
        <end position="1854"/>
    </location>
</feature>
<feature type="domain" description="Protein kinase" evidence="3">
    <location>
        <begin position="1945"/>
        <end position="2222"/>
    </location>
</feature>
<feature type="region of interest" description="Disordered" evidence="6">
    <location>
        <begin position="2284"/>
        <end position="2311"/>
    </location>
</feature>
<feature type="compositionally biased region" description="Basic and acidic residues" evidence="6">
    <location>
        <begin position="2301"/>
        <end position="2311"/>
    </location>
</feature>
<feature type="active site" description="Proton acceptor" evidence="3 5">
    <location>
        <position position="2079"/>
    </location>
</feature>
<feature type="binding site" evidence="3">
    <location>
        <begin position="1951"/>
        <end position="1959"/>
    </location>
    <ligand>
        <name>ATP</name>
        <dbReference type="ChEBI" id="CHEBI:30616"/>
    </ligand>
</feature>
<feature type="binding site" evidence="14">
    <location>
        <position position="1980"/>
    </location>
    <ligand>
        <name>ATP</name>
        <dbReference type="ChEBI" id="CHEBI:30616"/>
    </ligand>
</feature>
<feature type="site" description="Breakpoint for translocation to form SLC34A2-ROS1 and CD74-ROS1 fusion proteins" evidence="9">
    <location>
        <begin position="1852"/>
        <end position="1853"/>
    </location>
</feature>
<feature type="site" description="Breakpoint for translocation to form GOPC-ROS1 fusion protein" evidence="9">
    <location>
        <begin position="1880"/>
        <end position="1881"/>
    </location>
</feature>
<feature type="modified residue" description="Phosphotyrosine; by autocatalysis" evidence="15">
    <location>
        <position position="2274"/>
    </location>
</feature>
<feature type="modified residue" description="Phosphotyrosine; by autocatalysis" evidence="15">
    <location>
        <position position="2334"/>
    </location>
</feature>
<feature type="glycosylation site" description="N-linked (GlcNAc...) asparagine" evidence="2">
    <location>
        <position position="52"/>
    </location>
</feature>
<feature type="glycosylation site" description="N-linked (GlcNAc...) asparagine" evidence="2">
    <location>
        <position position="114"/>
    </location>
</feature>
<feature type="glycosylation site" description="N-linked (GlcNAc...) asparagine" evidence="2">
    <location>
        <position position="123"/>
    </location>
</feature>
<feature type="glycosylation site" description="N-linked (GlcNAc...) asparagine" evidence="2">
    <location>
        <position position="324"/>
    </location>
</feature>
<feature type="glycosylation site" description="N-linked (GlcNAc...) asparagine" evidence="2">
    <location>
        <position position="352"/>
    </location>
</feature>
<feature type="glycosylation site" description="N-linked (GlcNAc...) asparagine" evidence="2">
    <location>
        <position position="396"/>
    </location>
</feature>
<feature type="glycosylation site" description="N-linked (GlcNAc...) asparagine" evidence="2">
    <location>
        <position position="471"/>
    </location>
</feature>
<feature type="glycosylation site" description="N-linked (GlcNAc...) asparagine" evidence="2">
    <location>
        <position position="607"/>
    </location>
</feature>
<feature type="glycosylation site" description="N-linked (GlcNAc...) asparagine" evidence="2">
    <location>
        <position position="628"/>
    </location>
</feature>
<feature type="glycosylation site" description="N-linked (GlcNAc...) asparagine" evidence="2">
    <location>
        <position position="706"/>
    </location>
</feature>
<feature type="glycosylation site" description="N-linked (GlcNAc...) asparagine" evidence="2">
    <location>
        <position position="714"/>
    </location>
</feature>
<feature type="glycosylation site" description="N-linked (GlcNAc...) asparagine" evidence="2">
    <location>
        <position position="732"/>
    </location>
</feature>
<feature type="glycosylation site" description="N-linked (GlcNAc...) asparagine" evidence="2">
    <location>
        <position position="939"/>
    </location>
</feature>
<feature type="glycosylation site" description="N-linked (GlcNAc...) asparagine" evidence="2">
    <location>
        <position position="961"/>
    </location>
</feature>
<feature type="glycosylation site" description="N-linked (GlcNAc...) asparagine" evidence="2">
    <location>
        <position position="1015"/>
    </location>
</feature>
<feature type="glycosylation site" description="N-linked (GlcNAc...) asparagine" evidence="2">
    <location>
        <position position="1087"/>
    </location>
</feature>
<feature type="glycosylation site" description="N-linked (GlcNAc...) asparagine" evidence="2">
    <location>
        <position position="1090"/>
    </location>
</feature>
<feature type="glycosylation site" description="N-linked (GlcNAc...) asparagine" evidence="2">
    <location>
        <position position="1095"/>
    </location>
</feature>
<feature type="glycosylation site" description="N-linked (GlcNAc...) asparagine" evidence="2">
    <location>
        <position position="1211"/>
    </location>
</feature>
<feature type="glycosylation site" description="N-linked (GlcNAc...) asparagine" evidence="2">
    <location>
        <position position="1272"/>
    </location>
</feature>
<feature type="glycosylation site" description="N-linked (GlcNAc...) asparagine" evidence="2">
    <location>
        <position position="1330"/>
    </location>
</feature>
<feature type="glycosylation site" description="N-linked (GlcNAc...) asparagine" evidence="2">
    <location>
        <position position="1458"/>
    </location>
</feature>
<feature type="glycosylation site" description="N-linked (GlcNAc...) asparagine" evidence="2">
    <location>
        <position position="1461"/>
    </location>
</feature>
<feature type="glycosylation site" description="N-linked (GlcNAc...) asparagine" evidence="2">
    <location>
        <position position="1474"/>
    </location>
</feature>
<feature type="glycosylation site" description="N-linked (GlcNAc...) asparagine" evidence="2">
    <location>
        <position position="1499"/>
    </location>
</feature>
<feature type="glycosylation site" description="N-linked (GlcNAc...) asparagine" evidence="2">
    <location>
        <position position="1565"/>
    </location>
</feature>
<feature type="glycosylation site" description="N-linked (GlcNAc...) asparagine" evidence="2">
    <location>
        <position position="1669"/>
    </location>
</feature>
<feature type="glycosylation site" description="N-linked (GlcNAc...) asparagine" evidence="2">
    <location>
        <position position="1715"/>
    </location>
</feature>
<feature type="glycosylation site" description="N-linked (GlcNAc...) asparagine" evidence="2">
    <location>
        <position position="1738"/>
    </location>
</feature>
<feature type="glycosylation site" description="N-linked (GlcNAc...) asparagine" evidence="2">
    <location>
        <position position="1808"/>
    </location>
</feature>
<feature type="sequence variant" id="VAR_041442" description="In dbSNP:rs45606237." evidence="11">
    <original>N</original>
    <variation>S</variation>
    <location>
        <position position="13"/>
    </location>
</feature>
<feature type="sequence variant" id="VAR_041443" description="In dbSNP:rs34245787." evidence="11">
    <original>G</original>
    <variation>V</variation>
    <location>
        <position position="126"/>
    </location>
</feature>
<feature type="sequence variant" id="VAR_030648" description="In dbSNP:rs1998206." evidence="11">
    <original>T</original>
    <variation>P</variation>
    <location>
        <position position="145"/>
    </location>
</feature>
<feature type="sequence variant" id="VAR_030649" description="In dbSNP:rs2243380." evidence="11">
    <original>R</original>
    <variation>Q</variation>
    <location>
        <position position="167"/>
    </location>
</feature>
<feature type="sequence variant" id="VAR_041444" description="In dbSNP:rs55959124." evidence="11">
    <original>P</original>
    <variation>S</variation>
    <location>
        <position position="224"/>
    </location>
</feature>
<feature type="sequence variant" id="VAR_041445" description="In dbSNP:rs55707658." evidence="11">
    <original>Y</original>
    <variation>C</variation>
    <location>
        <position position="338"/>
    </location>
</feature>
<feature type="sequence variant" id="VAR_041446" description="In dbSNP:rs56274823." evidence="11">
    <original>S</original>
    <variation>P</variation>
    <location>
        <position position="370"/>
    </location>
</feature>
<feature type="sequence variant" id="VAR_041447" description="In a gastric adenocarcinoma sample; somatic mutation; dbSNP:rs1444274116." evidence="11">
    <original>Y</original>
    <variation>H</variation>
    <location>
        <position position="419"/>
    </location>
</feature>
<feature type="sequence variant" id="VAR_041448" description="In dbSNP:rs28639589." evidence="11">
    <original>I</original>
    <variation>M</variation>
    <location>
        <position position="537"/>
    </location>
</feature>
<feature type="sequence variant" id="VAR_041449" description="In dbSNP:rs34203286." evidence="11">
    <original>S</original>
    <variation>F</variation>
    <location>
        <position position="653"/>
    </location>
</feature>
<feature type="sequence variant" id="VAR_049712" description="In dbSNP:rs34582164.">
    <original>N</original>
    <variation>S</variation>
    <location>
        <position position="790"/>
    </location>
</feature>
<feature type="sequence variant" id="VAR_041450" description="In a lung large cell carcinoma sample; somatic mutation." evidence="11">
    <original>Q</original>
    <variation>H</variation>
    <location>
        <position position="865"/>
    </location>
</feature>
<feature type="sequence variant" id="VAR_030650" description="In dbSNP:rs2229079." evidence="11">
    <original>S</original>
    <variation>L</variation>
    <location>
        <position position="1109"/>
    </location>
</feature>
<feature type="sequence variant" id="VAR_041451" description="In dbSNP:rs56192249." evidence="11">
    <original>Y</original>
    <variation>F</variation>
    <location>
        <position position="1239"/>
    </location>
</feature>
<feature type="sequence variant" id="VAR_041452" description="In dbSNP:rs35269727." evidence="11">
    <original>Y</original>
    <variation>S</variation>
    <location>
        <position position="1353"/>
    </location>
</feature>
<feature type="sequence variant" id="VAR_041453" description="In dbSNP:rs36106063." evidence="11">
    <original>C</original>
    <variation>R</variation>
    <location>
        <position position="1370"/>
    </location>
</feature>
<feature type="sequence variant" id="VAR_030651" description="In dbSNP:rs17079086.">
    <original>F</original>
    <variation>S</variation>
    <location>
        <position position="1439"/>
    </location>
</feature>
<feature type="sequence variant" id="VAR_041454" description="In dbSNP:rs35841892." evidence="11">
    <original>R</original>
    <variation>G</variation>
    <location>
        <position position="1506"/>
    </location>
</feature>
<feature type="sequence variant" id="VAR_030652" description="In dbSNP:rs12664076." evidence="11">
    <original>D</original>
    <variation>H</variation>
    <location>
        <position position="1776"/>
    </location>
</feature>
<feature type="sequence variant" id="VAR_030653" description="In dbSNP:rs9489124." evidence="11">
    <original>E</original>
    <variation>K</variation>
    <location>
        <position position="1902"/>
    </location>
</feature>
<feature type="sequence variant" id="VAR_041455" description="In dbSNP:rs45569132." evidence="11">
    <original>H</original>
    <variation>N</variation>
    <location>
        <position position="1999"/>
    </location>
</feature>
<feature type="sequence variant" id="VAR_041456" description="In a colorectal adenocarcinoma sample; somatic mutation." evidence="11">
    <original>K</original>
    <variation>R</variation>
    <location>
        <position position="2003"/>
    </location>
</feature>
<feature type="sequence variant" id="VAR_030654" description="In dbSNP:rs3752566.">
    <original>R</original>
    <variation>H</variation>
    <location>
        <position position="2039"/>
    </location>
</feature>
<feature type="sequence variant" id="VAR_041457" description="In a gastric adenocarcinoma sample; somatic mutation." evidence="11">
    <original>F</original>
    <variation>S</variation>
    <location>
        <position position="2138"/>
    </location>
</feature>
<feature type="sequence variant" id="VAR_041458" description="In dbSNP:rs556427413." evidence="11">
    <original>D</original>
    <variation>N</variation>
    <location>
        <position position="2203"/>
    </location>
</feature>
<feature type="sequence variant" id="VAR_041459" description="In dbSNP:rs75510639." evidence="11">
    <original>D</original>
    <variation>E</variation>
    <location>
        <position position="2213"/>
    </location>
</feature>
<feature type="sequence variant" id="VAR_030655" description="In dbSNP:rs529038." evidence="11 12">
    <original>D</original>
    <variation>N</variation>
    <location>
        <position position="2213"/>
    </location>
</feature>
<feature type="sequence variant" id="VAR_041460" description="In dbSNP:rs529156." evidence="11 12">
    <original>K</original>
    <variation>Q</variation>
    <location>
        <position position="2228"/>
    </location>
</feature>
<feature type="sequence variant" id="VAR_030656" description="In dbSNP:rs619203." evidence="11 12">
    <original>S</original>
    <variation>C</variation>
    <location>
        <position position="2229"/>
    </location>
</feature>
<feature type="sequence variant" id="VAR_030657" description="In dbSNP:rs210968." evidence="11">
    <original>N</original>
    <variation>K</variation>
    <location>
        <position position="2240"/>
    </location>
</feature>
<feature type="sequence variant" id="VAR_049713" description="In dbSNP:rs35932630.">
    <original>K</original>
    <variation>R</variation>
    <location>
        <position position="2328"/>
    </location>
</feature>
<feature type="mutagenesis site" description="Loss of kinase activity." evidence="9">
    <original>K</original>
    <variation>M</variation>
    <location>
        <position position="1980"/>
    </location>
</feature>
<feature type="mutagenesis site" description="Loss of phosphorylation at Y-2274 and loss of interaction with PTPN11." evidence="8">
    <original>Y</original>
    <variation>F</variation>
    <location>
        <position position="2274"/>
    </location>
</feature>
<feature type="mutagenesis site" description="Loss of phosphorylation at Y-2334 and loss of interaction with PTPN11." evidence="8">
    <original>Y</original>
    <variation>F</variation>
    <location>
        <position position="2334"/>
    </location>
</feature>
<feature type="sequence conflict" description="In Ref. 3; AAA60277." evidence="14" ref="3">
    <original>EDGDVICLNSDDIMP</original>
    <variation>KFDSSEFSSFRCTVN</variation>
    <location>
        <begin position="2246"/>
        <end position="2260"/>
    </location>
</feature>
<feature type="sequence conflict" description="In Ref. 1; AAA60278." evidence="14" ref="1">
    <original>A</original>
    <variation>V</variation>
    <location>
        <position position="2262"/>
    </location>
</feature>
<feature type="helix" evidence="17">
    <location>
        <begin position="1942"/>
        <end position="1944"/>
    </location>
</feature>
<feature type="strand" evidence="17">
    <location>
        <begin position="1945"/>
        <end position="1952"/>
    </location>
</feature>
<feature type="turn" evidence="17">
    <location>
        <begin position="1954"/>
        <end position="1956"/>
    </location>
</feature>
<feature type="strand" evidence="17">
    <location>
        <begin position="1959"/>
        <end position="1966"/>
    </location>
</feature>
<feature type="strand" evidence="17">
    <location>
        <begin position="1969"/>
        <end position="1971"/>
    </location>
</feature>
<feature type="strand" evidence="17">
    <location>
        <begin position="1974"/>
        <end position="1982"/>
    </location>
</feature>
<feature type="helix" evidence="17">
    <location>
        <begin position="1988"/>
        <end position="2001"/>
    </location>
</feature>
<feature type="strand" evidence="17">
    <location>
        <begin position="2012"/>
        <end position="2016"/>
    </location>
</feature>
<feature type="strand" evidence="17">
    <location>
        <begin position="2018"/>
        <end position="2027"/>
    </location>
</feature>
<feature type="helix" evidence="17">
    <location>
        <begin position="2034"/>
        <end position="2043"/>
    </location>
</feature>
<feature type="helix" evidence="17">
    <location>
        <begin position="2053"/>
        <end position="2072"/>
    </location>
</feature>
<feature type="helix" evidence="17">
    <location>
        <begin position="2082"/>
        <end position="2084"/>
    </location>
</feature>
<feature type="strand" evidence="17">
    <location>
        <begin position="2085"/>
        <end position="2088"/>
    </location>
</feature>
<feature type="strand" evidence="17">
    <location>
        <begin position="2090"/>
        <end position="2094"/>
    </location>
</feature>
<feature type="strand" evidence="17">
    <location>
        <begin position="2098"/>
        <end position="2100"/>
    </location>
</feature>
<feature type="helix" evidence="17">
    <location>
        <begin position="2125"/>
        <end position="2127"/>
    </location>
</feature>
<feature type="helix" evidence="17">
    <location>
        <begin position="2130"/>
        <end position="2135"/>
    </location>
</feature>
<feature type="helix" evidence="17">
    <location>
        <begin position="2140"/>
        <end position="2155"/>
    </location>
</feature>
<feature type="strand" evidence="16">
    <location>
        <begin position="2161"/>
        <end position="2165"/>
    </location>
</feature>
<feature type="helix" evidence="17">
    <location>
        <begin position="2167"/>
        <end position="2175"/>
    </location>
</feature>
<feature type="helix" evidence="17">
    <location>
        <begin position="2188"/>
        <end position="2197"/>
    </location>
</feature>
<feature type="helix" evidence="17">
    <location>
        <begin position="2202"/>
        <end position="2204"/>
    </location>
</feature>
<feature type="helix" evidence="17">
    <location>
        <begin position="2208"/>
        <end position="2224"/>
    </location>
</feature>
<organism>
    <name type="scientific">Homo sapiens</name>
    <name type="common">Human</name>
    <dbReference type="NCBI Taxonomy" id="9606"/>
    <lineage>
        <taxon>Eukaryota</taxon>
        <taxon>Metazoa</taxon>
        <taxon>Chordata</taxon>
        <taxon>Craniata</taxon>
        <taxon>Vertebrata</taxon>
        <taxon>Euteleostomi</taxon>
        <taxon>Mammalia</taxon>
        <taxon>Eutheria</taxon>
        <taxon>Euarchontoglires</taxon>
        <taxon>Primates</taxon>
        <taxon>Haplorrhini</taxon>
        <taxon>Catarrhini</taxon>
        <taxon>Hominidae</taxon>
        <taxon>Homo</taxon>
    </lineage>
</organism>
<proteinExistence type="evidence at protein level"/>
<comment type="function">
    <text evidence="1 7 10">Receptor tyrosine kinase (RTK) that plays a role in epithelial cell differentiation and regionalization of the proximal epididymal epithelium. NELL2 is an endogenous ligand for ROS1. Upon endogenous stimulation by NELL2, ROS1 activates the intracellular signaling pathway and triggers epididymal epithelial differentiation and subsequent sperm maturation (By similarity). May activate several downstream signaling pathways related to cell differentiation, proliferation, growth and survival including the PI3 kinase-mTOR signaling pathway. Mediates the phosphorylation of PTPN11, an activator of this pathway. May also phosphorylate and activate the transcription factor STAT3 to control anchorage-independent cell growth. Mediates the phosphorylation and the activation of VAV3, a guanine nucleotide exchange factor regulating cell morphology. May activate other downstream signaling proteins including AKT1, MAPK1, MAPK3, IRS1 and PLCG2.</text>
</comment>
<comment type="catalytic activity">
    <reaction evidence="7 10">
        <text>L-tyrosyl-[protein] + ATP = O-phospho-L-tyrosyl-[protein] + ADP + H(+)</text>
        <dbReference type="Rhea" id="RHEA:10596"/>
        <dbReference type="Rhea" id="RHEA-COMP:10136"/>
        <dbReference type="Rhea" id="RHEA-COMP:20101"/>
        <dbReference type="ChEBI" id="CHEBI:15378"/>
        <dbReference type="ChEBI" id="CHEBI:30616"/>
        <dbReference type="ChEBI" id="CHEBI:46858"/>
        <dbReference type="ChEBI" id="CHEBI:61978"/>
        <dbReference type="ChEBI" id="CHEBI:456216"/>
        <dbReference type="EC" id="2.7.10.1"/>
    </reaction>
</comment>
<comment type="activity regulation">
    <text evidence="1">Inhibited by dephosphorylation by PTPN6.</text>
</comment>
<comment type="subunit">
    <text evidence="1 7 10">Interacts with PTPN6 (via SH2 1 domain); the interaction is direct and promotes ROS1 dephosphorylation (By similarity). Interacts with PTPN11; may activate the PI3 kinase-mTOR signaling pathway (PubMed:16885344). Interacts with VAV3; constitutive interaction mediating VAV3 phosphorylation (PubMed:11094073).</text>
</comment>
<comment type="interaction">
    <interactant intactId="EBI-7371065">
        <id>P08922</id>
    </interactant>
    <interactant intactId="EBI-968788">
        <id>P18031</id>
        <label>PTPN1</label>
    </interactant>
    <organismsDiffer>false</organismsDiffer>
    <experiments>3</experiments>
</comment>
<comment type="interaction">
    <interactant intactId="EBI-7371065">
        <id>P08922</id>
    </interactant>
    <interactant intactId="EBI-78260">
        <id>P29350</id>
        <label>PTPN6</label>
    </interactant>
    <organismsDiffer>false</organismsDiffer>
    <experiments>2</experiments>
</comment>
<comment type="subcellular location">
    <subcellularLocation>
        <location evidence="14">Cell membrane</location>
        <topology evidence="14">Single-pass type I membrane protein</topology>
    </subcellularLocation>
</comment>
<comment type="tissue specificity">
    <text evidence="13">Expressed in brain. Expression is increased in primary gliomas.</text>
</comment>
<comment type="PTM">
    <text evidence="1 8">Phosphorylated. Probably autophosphorylates. Phosphorylation at Tyr-2274 is required for the interaction with PTPN6 that mediates ROS1 dephosphorylation. Phosphorylation at Tyr-2274 stimulates the kinase activity and the activation of the ERK1 signaling cascade (By similarity). Phosphorylation at Tyr-2274 and/or Tyr-2334 recruits PTPN11 (PubMed:12538861).</text>
</comment>
<comment type="disease">
    <text evidence="9">A chromosomal aberration involving ROS1 is found in a glioblastoma multiforme sample. An intra-chromosomal deletion del(6)(q21q21) is responsible for the formation of GOPC-ROS1 chimeric protein which is localized to the Golgi and has a constitutive receptor tyrosine kinase activity. A SLC34A2-ROS1 chimeric protein produced in non-small cell lung cancer cells also retains a constitutive kinase activity. A third type of chimeric protein CD74-ROS1 was also identified in those cells.</text>
</comment>
<comment type="similarity">
    <text evidence="3">Belongs to the protein kinase superfamily. Tyr protein kinase family. Insulin receptor subfamily.</text>
</comment>
<name>ROS1_HUMAN</name>
<reference key="1">
    <citation type="journal article" date="1990" name="Proc. Natl. Acad. Sci. U.S.A.">
        <title>Characterization of ROS1 cDNA from a human glioblastoma cell line.</title>
        <authorList>
            <person name="Birchmeier C."/>
            <person name="O'Neill K."/>
            <person name="Riggs M."/>
            <person name="Wigler M."/>
        </authorList>
    </citation>
    <scope>NUCLEOTIDE SEQUENCE [MRNA]</scope>
    <scope>VARIANTS ASN-2213; GLN-2228 AND CYS-2229</scope>
</reference>
<reference key="2">
    <citation type="journal article" date="2003" name="Nature">
        <title>The DNA sequence and analysis of human chromosome 6.</title>
        <authorList>
            <person name="Mungall A.J."/>
            <person name="Palmer S.A."/>
            <person name="Sims S.K."/>
            <person name="Edwards C.A."/>
            <person name="Ashurst J.L."/>
            <person name="Wilming L."/>
            <person name="Jones M.C."/>
            <person name="Horton R."/>
            <person name="Hunt S.E."/>
            <person name="Scott C.E."/>
            <person name="Gilbert J.G.R."/>
            <person name="Clamp M.E."/>
            <person name="Bethel G."/>
            <person name="Milne S."/>
            <person name="Ainscough R."/>
            <person name="Almeida J.P."/>
            <person name="Ambrose K.D."/>
            <person name="Andrews T.D."/>
            <person name="Ashwell R.I.S."/>
            <person name="Babbage A.K."/>
            <person name="Bagguley C.L."/>
            <person name="Bailey J."/>
            <person name="Banerjee R."/>
            <person name="Barker D.J."/>
            <person name="Barlow K.F."/>
            <person name="Bates K."/>
            <person name="Beare D.M."/>
            <person name="Beasley H."/>
            <person name="Beasley O."/>
            <person name="Bird C.P."/>
            <person name="Blakey S.E."/>
            <person name="Bray-Allen S."/>
            <person name="Brook J."/>
            <person name="Brown A.J."/>
            <person name="Brown J.Y."/>
            <person name="Burford D.C."/>
            <person name="Burrill W."/>
            <person name="Burton J."/>
            <person name="Carder C."/>
            <person name="Carter N.P."/>
            <person name="Chapman J.C."/>
            <person name="Clark S.Y."/>
            <person name="Clark G."/>
            <person name="Clee C.M."/>
            <person name="Clegg S."/>
            <person name="Cobley V."/>
            <person name="Collier R.E."/>
            <person name="Collins J.E."/>
            <person name="Colman L.K."/>
            <person name="Corby N.R."/>
            <person name="Coville G.J."/>
            <person name="Culley K.M."/>
            <person name="Dhami P."/>
            <person name="Davies J."/>
            <person name="Dunn M."/>
            <person name="Earthrowl M.E."/>
            <person name="Ellington A.E."/>
            <person name="Evans K.A."/>
            <person name="Faulkner L."/>
            <person name="Francis M.D."/>
            <person name="Frankish A."/>
            <person name="Frankland J."/>
            <person name="French L."/>
            <person name="Garner P."/>
            <person name="Garnett J."/>
            <person name="Ghori M.J."/>
            <person name="Gilby L.M."/>
            <person name="Gillson C.J."/>
            <person name="Glithero R.J."/>
            <person name="Grafham D.V."/>
            <person name="Grant M."/>
            <person name="Gribble S."/>
            <person name="Griffiths C."/>
            <person name="Griffiths M.N.D."/>
            <person name="Hall R."/>
            <person name="Halls K.S."/>
            <person name="Hammond S."/>
            <person name="Harley J.L."/>
            <person name="Hart E.A."/>
            <person name="Heath P.D."/>
            <person name="Heathcott R."/>
            <person name="Holmes S.J."/>
            <person name="Howden P.J."/>
            <person name="Howe K.L."/>
            <person name="Howell G.R."/>
            <person name="Huckle E."/>
            <person name="Humphray S.J."/>
            <person name="Humphries M.D."/>
            <person name="Hunt A.R."/>
            <person name="Johnson C.M."/>
            <person name="Joy A.A."/>
            <person name="Kay M."/>
            <person name="Keenan S.J."/>
            <person name="Kimberley A.M."/>
            <person name="King A."/>
            <person name="Laird G.K."/>
            <person name="Langford C."/>
            <person name="Lawlor S."/>
            <person name="Leongamornlert D.A."/>
            <person name="Leversha M."/>
            <person name="Lloyd C.R."/>
            <person name="Lloyd D.M."/>
            <person name="Loveland J.E."/>
            <person name="Lovell J."/>
            <person name="Martin S."/>
            <person name="Mashreghi-Mohammadi M."/>
            <person name="Maslen G.L."/>
            <person name="Matthews L."/>
            <person name="McCann O.T."/>
            <person name="McLaren S.J."/>
            <person name="McLay K."/>
            <person name="McMurray A."/>
            <person name="Moore M.J.F."/>
            <person name="Mullikin J.C."/>
            <person name="Niblett D."/>
            <person name="Nickerson T."/>
            <person name="Novik K.L."/>
            <person name="Oliver K."/>
            <person name="Overton-Larty E.K."/>
            <person name="Parker A."/>
            <person name="Patel R."/>
            <person name="Pearce A.V."/>
            <person name="Peck A.I."/>
            <person name="Phillimore B.J.C.T."/>
            <person name="Phillips S."/>
            <person name="Plumb R.W."/>
            <person name="Porter K.M."/>
            <person name="Ramsey Y."/>
            <person name="Ranby S.A."/>
            <person name="Rice C.M."/>
            <person name="Ross M.T."/>
            <person name="Searle S.M."/>
            <person name="Sehra H.K."/>
            <person name="Sheridan E."/>
            <person name="Skuce C.D."/>
            <person name="Smith S."/>
            <person name="Smith M."/>
            <person name="Spraggon L."/>
            <person name="Squares S.L."/>
            <person name="Steward C.A."/>
            <person name="Sycamore N."/>
            <person name="Tamlyn-Hall G."/>
            <person name="Tester J."/>
            <person name="Theaker A.J."/>
            <person name="Thomas D.W."/>
            <person name="Thorpe A."/>
            <person name="Tracey A."/>
            <person name="Tromans A."/>
            <person name="Tubby B."/>
            <person name="Wall M."/>
            <person name="Wallis J.M."/>
            <person name="West A.P."/>
            <person name="White S.S."/>
            <person name="Whitehead S.L."/>
            <person name="Whittaker H."/>
            <person name="Wild A."/>
            <person name="Willey D.J."/>
            <person name="Wilmer T.E."/>
            <person name="Wood J.M."/>
            <person name="Wray P.W."/>
            <person name="Wyatt J.C."/>
            <person name="Young L."/>
            <person name="Younger R.M."/>
            <person name="Bentley D.R."/>
            <person name="Coulson A."/>
            <person name="Durbin R.M."/>
            <person name="Hubbard T."/>
            <person name="Sulston J.E."/>
            <person name="Dunham I."/>
            <person name="Rogers J."/>
            <person name="Beck S."/>
        </authorList>
    </citation>
    <scope>NUCLEOTIDE SEQUENCE [LARGE SCALE GENOMIC DNA]</scope>
</reference>
<reference key="3">
    <citation type="journal article" date="1986" name="Mol. Cell. Biol.">
        <title>Human c-ros-1 gene homologous to the v-ros sequence of UR2 sarcoma virus encodes for a transmembrane receptorlike molecule.</title>
        <authorList>
            <person name="Matsushime H."/>
            <person name="Wang L.-H."/>
            <person name="Shibuya M."/>
        </authorList>
    </citation>
    <scope>NUCLEOTIDE SEQUENCE [GENOMIC DNA] OF 1790-2260</scope>
</reference>
<reference key="4">
    <citation type="journal article" date="1986" name="Mol. Cell. Biol.">
        <title>Characterization of an activated human ros gene.</title>
        <authorList>
            <person name="Birchmeier C."/>
            <person name="Birnbaum D."/>
            <person name="Waitches G."/>
            <person name="Fasano O."/>
            <person name="Wigler M."/>
        </authorList>
    </citation>
    <scope>NUCLEOTIDE SEQUENCE [MRNA] OF 1854-2347</scope>
</reference>
<reference key="5">
    <citation type="journal article" date="1994" name="Cancer Genet. Cytogenet.">
        <title>Analysis of oncogene expression in primary human gliomas: evidence for increased expression of the ros oncogene.</title>
        <authorList>
            <person name="Watkins D."/>
            <person name="Dion F."/>
            <person name="Poisson M."/>
            <person name="Delattre J.Y."/>
            <person name="Rouleau G.A."/>
        </authorList>
    </citation>
    <scope>TISSUE SPECIFICITY</scope>
</reference>
<reference key="6">
    <citation type="journal article" date="2000" name="Mol. Cell. Biol.">
        <title>Vav3 mediates receptor protein tyrosine kinase signaling, regulates GTPase activity, modulates cell morphology, and induces cell transformation.</title>
        <authorList>
            <person name="Zeng L."/>
            <person name="Sachdev P."/>
            <person name="Yan L."/>
            <person name="Chan J.L."/>
            <person name="Trenkle T."/>
            <person name="McClelland M."/>
            <person name="Welsh J."/>
            <person name="Wang L.H."/>
        </authorList>
    </citation>
    <scope>FUNCTION</scope>
    <scope>INTERACTION WITH VAV3</scope>
    <scope>CATALYTIC ACTIVITY</scope>
</reference>
<reference key="7">
    <citation type="journal article" date="2003" name="Genes Chromosomes Cancer">
        <title>Fusion of FIG to the receptor tyrosine kinase ROS in a glioblastoma with an interstitial del(6)(q21q21).</title>
        <authorList>
            <person name="Charest A."/>
            <person name="Lane K."/>
            <person name="McMahon K."/>
            <person name="Park J."/>
            <person name="Preisinger E."/>
            <person name="Conroy H."/>
            <person name="Housman D."/>
        </authorList>
    </citation>
    <scope>DISEASE</scope>
    <scope>CHROMOSOMAL TRANSLOCATION WITH GOPC</scope>
    <scope>MUTAGENESIS OF LYS-1980</scope>
</reference>
<reference key="8">
    <citation type="journal article" date="2003" name="Proc. Natl. Acad. Sci. U.S.A.">
        <title>Oncogenic targeting of an activated tyrosine kinase to the Golgi apparatus in a glioblastoma.</title>
        <authorList>
            <person name="Charest A."/>
            <person name="Kheifets V."/>
            <person name="Park J."/>
            <person name="Lane K."/>
            <person name="McMahon K."/>
            <person name="Nutt C.L."/>
            <person name="Housman D."/>
        </authorList>
    </citation>
    <scope>PHOSPHORYLATION AT TYR-2274 AND TYR-2334</scope>
    <scope>MUTAGENESIS OF TYR-2274 AND TYR-2334</scope>
</reference>
<reference key="9">
    <citation type="journal article" date="2006" name="Cancer Res.">
        <title>ROS fusion tyrosine kinase activates a SH2 domain-containing phosphatase-2/phosphatidylinositol 3-kinase/mammalian target of rapamycin signaling axis to form glioblastoma in mice.</title>
        <authorList>
            <person name="Charest A."/>
            <person name="Wilker E.W."/>
            <person name="McLaughlin M.E."/>
            <person name="Lane K."/>
            <person name="Gowda R."/>
            <person name="Coven S."/>
            <person name="McMahon K."/>
            <person name="Kovach S."/>
            <person name="Feng Y."/>
            <person name="Yaffe M.B."/>
            <person name="Jacks T."/>
            <person name="Housman D."/>
        </authorList>
    </citation>
    <scope>FUNCTION</scope>
    <scope>CATALYTIC ACTIVITY</scope>
    <scope>INTERACTION WITH PTPN11</scope>
</reference>
<reference key="10">
    <citation type="journal article" date="2007" name="Nature">
        <title>Patterns of somatic mutation in human cancer genomes.</title>
        <authorList>
            <person name="Greenman C."/>
            <person name="Stephens P."/>
            <person name="Smith R."/>
            <person name="Dalgliesh G.L."/>
            <person name="Hunter C."/>
            <person name="Bignell G."/>
            <person name="Davies H."/>
            <person name="Teague J."/>
            <person name="Butler A."/>
            <person name="Stevens C."/>
            <person name="Edkins S."/>
            <person name="O'Meara S."/>
            <person name="Vastrik I."/>
            <person name="Schmidt E.E."/>
            <person name="Avis T."/>
            <person name="Barthorpe S."/>
            <person name="Bhamra G."/>
            <person name="Buck G."/>
            <person name="Choudhury B."/>
            <person name="Clements J."/>
            <person name="Cole J."/>
            <person name="Dicks E."/>
            <person name="Forbes S."/>
            <person name="Gray K."/>
            <person name="Halliday K."/>
            <person name="Harrison R."/>
            <person name="Hills K."/>
            <person name="Hinton J."/>
            <person name="Jenkinson A."/>
            <person name="Jones D."/>
            <person name="Menzies A."/>
            <person name="Mironenko T."/>
            <person name="Perry J."/>
            <person name="Raine K."/>
            <person name="Richardson D."/>
            <person name="Shepherd R."/>
            <person name="Small A."/>
            <person name="Tofts C."/>
            <person name="Varian J."/>
            <person name="Webb T."/>
            <person name="West S."/>
            <person name="Widaa S."/>
            <person name="Yates A."/>
            <person name="Cahill D.P."/>
            <person name="Louis D.N."/>
            <person name="Goldstraw P."/>
            <person name="Nicholson A.G."/>
            <person name="Brasseur F."/>
            <person name="Looijenga L."/>
            <person name="Weber B.L."/>
            <person name="Chiew Y.-E."/>
            <person name="DeFazio A."/>
            <person name="Greaves M.F."/>
            <person name="Green A.R."/>
            <person name="Campbell P."/>
            <person name="Birney E."/>
            <person name="Easton D.F."/>
            <person name="Chenevix-Trench G."/>
            <person name="Tan M.-H."/>
            <person name="Khoo S.K."/>
            <person name="Teh B.T."/>
            <person name="Yuen S.T."/>
            <person name="Leung S.Y."/>
            <person name="Wooster R."/>
            <person name="Futreal P.A."/>
            <person name="Stratton M.R."/>
        </authorList>
    </citation>
    <scope>VARIANTS [LARGE SCALE ANALYSIS] SER-13; VAL-126; PRO-145; GLN-167; SER-224; CYS-338; PRO-370; HIS-419; MET-537; PHE-653; HIS-865; LEU-1109; PHE-1239; SER-1353; ARG-1370; GLY-1506; HIS-1776; LYS-1902; ASN-1999; ARG-2003; SER-2138; ASN-2203; GLU-2213; ASN-2213; GLN-2228; CYS-2229 AND LYS-2240</scope>
</reference>
<sequence>MKNIYCLIPKLVNFATLGCLWISVVQCTVLNSCLKSCVTNLGQQLDLGTPHNLSEPCIQGCHFWNSVDQKNCALKCRESCEVGCSSAEGAYEEEVLENADLPTAPFASSIGSHNMTLRWKSANFSGVKYIIQWKYAQLLGSWTYTKTVSRPSYVVKPLHPFTEYIFRVVWIFTAQLQLYSPPSPSYRTHPHGVPETAPLIRNIESSSPDTVEVSWDPPQFPGGPILGYNLRLISKNQKLDAGTQRTSFQFYSTLPNTIYRFSIAAVNEVGEGPEAESSITTSSSAVQQEEQWLFLSRKTSLRKRSLKHLVDEAHCLRLDAIYHNITGISVDVHQQIVYFSEGTLIWAKKAANMSDVSDLRIFYRGSGLISSISIDWLYQRMYFIMDELVCVCDLENCSNIEEITPPSISAPQKIVADSYNGYVFYLLRDGIYRADLPVPSGRCAEAVRIVESCTLKDFAIKPQAKRIIYFNDTAQVFMSTFLDGSASHLILPRIPFADVKSFACENNDFLVTDGKVIFQQDALSFNEFIVGCDLSHIEEFGFGNLVIFGSSSQLHPLPGRPQELSVLFGSHQALVQWKPPALAIGANVILISDIIELFELGPSAWQNWTYEVKVSTQDPPEVTHIFLNISGTMLNVPELQSAMKYKVSVRASSPKRPGPWSEPSVGTTLVPASEPPFIMAVKEDGLWSKPLNSFGPGEFLSSDIGNVSDMDWYNNSLYYSDTKGDVFVWLLNGTDISENYHLPSIAGAGALAFEWLGHFLYWAGKTYVIQRQSVLTGHTDIVTHVKLLVNDMVVDSVGGYLYWTTLYSVESTRLNGESSLVLQTQPWFSGKKVIALTLDLSDGLLYWLVQDSQCIHLYTAVLRGQSTGDTTITEFAAWSTSEISQNALMYYSGRLFWINGFRIITTQEIGQKTSVSVLEPARFNQFTIIQTSLKPLPGNFSFTPKVIPDSVQESSFRIEGNASSFQILWNGPPAVDWGVVFYSVEFSAHSKFLASEQHSLPVFTVEGLEPYALFNLSVTPYTYWGKGPKTSLSLRAPETVPSAPENPRIFILPSGKCCNKNEVVVEFRWNKPKHENGVLTKFEIFYNISNQSITNKTCEDWIAVNVTPSVMSFQLEGMSPRCFIAFQVRAFTSKGPGPYADVVKSTTSEINPFPHLITLLGNKIVFLDMDQNQVVWTFSAERVISAVCYTADNEMGYYAEGDSLFLLHLHNRSSSELFQDSLVFDITVITIDWISRHLYFALKESQNGMQVFDVDLEHKVKYPREVKIHNRNSTIISFSVYPLLSRLYWTEVSNFGYQMFYYSIISHTLHRILQPTATNQQNKRNQCSCNVTEFELSGAMAIDTSNLEKPLIYFAKAQEIWAMDLEGCQCWRVITVPAMLAGKTLVSLTVDGDLIYWIITAKDSTQIYQAKKGNGAIVSQVKALRSRHILAYSSVMQPFPDKAFLSLASDTVEPTILNATNTSLTIRLPLAKTNLTWYGITSPTPTYLVYYAEVNDRKNSSDLKYRILEFQDSIALIEDLQPFSTYMIQIAVKNYYSDPLEHLPPGKEIWGKTKNGVPEAVQLINTTVRSDTSLIISWRESHKPNGPKESVRYQLAISHLALIPETPLRQSEFPNGRLTLLVTRLSGGNIYVLKVLACHSEEMWCTESHPVTVEMFNTPEKPYSLVPENTSLQFNWKAPLNVNLIRFWVELQKWKYNEFYHVKTSCSQGPAYVCNITNLQPYTSYNVRVVVVYKTGENSTSLPESFKTKAGVPNKPGIPKLLEGSKNSIQWEKAEDNGCRITYYILEIRKSTSNNLQNQNLRWKMTFNGSCSSVCTWKSKNLKGIFQFRVVAANNLGFGEYSGISENIILVGDDFWIPETSFILTIIVGIFLVVTIPLTFVWHRRLKNQKSAKEGVTVLINEDKELAELRGLAAGVGLANACYAIHTLPTQEEIENLPAFPREKLTLRLLLGSGAFGEVYEGTAVDILGVGSGEIKVAVKTLKKGSTDQEKIEFLKEAHLMSKFNHPNILKQLGVCLLNEPQYIILELMEGGDLLTYLRKARMATFYGPLLTLVDLVDLCVDISKGCVYLERMHFIHRDLAARNCLVSVKDYTSPRIVKIGDFGLARDIYKNDYYRKRGEGLLPVRWMAPESLMDGIFTTQSDVWSFGILIWEILTLGHQPYPAHSNLDVLNYVQTGGRLEPPRNCPDDLWNLMTQCWAQEPDQRPTFHRIQDQLQLFRNFFLNSIYKSRDEANNSGVINESFEGEDGDVICLNSDDIMPVALMETKNREGLNYMVLATECGQGEEKSEGPLGSQESESCGLRKEEKEPHADKDFCQEKQVAYCPSGKPEGLNYACLTHSGYGDGSD</sequence>